<proteinExistence type="inferred from homology"/>
<evidence type="ECO:0000255" key="1">
    <source>
        <dbReference type="HAMAP-Rule" id="MF_00081"/>
    </source>
</evidence>
<evidence type="ECO:0000305" key="2"/>
<protein>
    <recommendedName>
        <fullName evidence="1">Heat-inducible transcription repressor HrcA</fullName>
    </recommendedName>
</protein>
<dbReference type="EMBL" id="BA000036">
    <property type="protein sequence ID" value="BAB99684.1"/>
    <property type="molecule type" value="Genomic_DNA"/>
</dbReference>
<dbReference type="EMBL" id="BX927154">
    <property type="protein sequence ID" value="CAF20633.1"/>
    <property type="status" value="ALT_INIT"/>
    <property type="molecule type" value="Genomic_DNA"/>
</dbReference>
<dbReference type="RefSeq" id="NP_601491.2">
    <property type="nucleotide sequence ID" value="NC_003450.3"/>
</dbReference>
<dbReference type="SMR" id="Q8NNB3"/>
<dbReference type="STRING" id="196627.cg2516"/>
<dbReference type="DNASU" id="1020244"/>
<dbReference type="KEGG" id="cgb:cg2516"/>
<dbReference type="KEGG" id="cgl:Cgl2291"/>
<dbReference type="PATRIC" id="fig|196627.13.peg.2225"/>
<dbReference type="eggNOG" id="COG1420">
    <property type="taxonomic scope" value="Bacteria"/>
</dbReference>
<dbReference type="HOGENOM" id="CLU_050019_2_0_11"/>
<dbReference type="OrthoDB" id="9783139at2"/>
<dbReference type="BioCyc" id="CORYNE:G18NG-11888-MONOMER"/>
<dbReference type="Proteomes" id="UP000000582">
    <property type="component" value="Chromosome"/>
</dbReference>
<dbReference type="Proteomes" id="UP000001009">
    <property type="component" value="Chromosome"/>
</dbReference>
<dbReference type="GO" id="GO:0003677">
    <property type="term" value="F:DNA binding"/>
    <property type="evidence" value="ECO:0007669"/>
    <property type="project" value="InterPro"/>
</dbReference>
<dbReference type="GO" id="GO:0045892">
    <property type="term" value="P:negative regulation of DNA-templated transcription"/>
    <property type="evidence" value="ECO:0007669"/>
    <property type="project" value="UniProtKB-UniRule"/>
</dbReference>
<dbReference type="FunFam" id="1.10.10.10:FF:000049">
    <property type="entry name" value="Heat-inducible transcription repressor HrcA"/>
    <property type="match status" value="1"/>
</dbReference>
<dbReference type="Gene3D" id="3.30.450.40">
    <property type="match status" value="1"/>
</dbReference>
<dbReference type="Gene3D" id="3.30.390.60">
    <property type="entry name" value="Heat-inducible transcription repressor hrca homolog, domain 3"/>
    <property type="match status" value="1"/>
</dbReference>
<dbReference type="Gene3D" id="1.10.10.10">
    <property type="entry name" value="Winged helix-like DNA-binding domain superfamily/Winged helix DNA-binding domain"/>
    <property type="match status" value="1"/>
</dbReference>
<dbReference type="HAMAP" id="MF_00081">
    <property type="entry name" value="HrcA"/>
    <property type="match status" value="1"/>
</dbReference>
<dbReference type="InterPro" id="IPR029016">
    <property type="entry name" value="GAF-like_dom_sf"/>
</dbReference>
<dbReference type="InterPro" id="IPR002571">
    <property type="entry name" value="HrcA"/>
</dbReference>
<dbReference type="InterPro" id="IPR021153">
    <property type="entry name" value="HrcA_C"/>
</dbReference>
<dbReference type="InterPro" id="IPR036388">
    <property type="entry name" value="WH-like_DNA-bd_sf"/>
</dbReference>
<dbReference type="InterPro" id="IPR036390">
    <property type="entry name" value="WH_DNA-bd_sf"/>
</dbReference>
<dbReference type="InterPro" id="IPR023120">
    <property type="entry name" value="WHTH_transcript_rep_HrcA_IDD"/>
</dbReference>
<dbReference type="NCBIfam" id="TIGR00331">
    <property type="entry name" value="hrcA"/>
    <property type="match status" value="1"/>
</dbReference>
<dbReference type="PANTHER" id="PTHR34824">
    <property type="entry name" value="HEAT-INDUCIBLE TRANSCRIPTION REPRESSOR HRCA"/>
    <property type="match status" value="1"/>
</dbReference>
<dbReference type="PANTHER" id="PTHR34824:SF1">
    <property type="entry name" value="HEAT-INDUCIBLE TRANSCRIPTION REPRESSOR HRCA"/>
    <property type="match status" value="1"/>
</dbReference>
<dbReference type="Pfam" id="PF01628">
    <property type="entry name" value="HrcA"/>
    <property type="match status" value="1"/>
</dbReference>
<dbReference type="PIRSF" id="PIRSF005485">
    <property type="entry name" value="HrcA"/>
    <property type="match status" value="1"/>
</dbReference>
<dbReference type="SUPFAM" id="SSF55781">
    <property type="entry name" value="GAF domain-like"/>
    <property type="match status" value="1"/>
</dbReference>
<dbReference type="SUPFAM" id="SSF46785">
    <property type="entry name" value="Winged helix' DNA-binding domain"/>
    <property type="match status" value="1"/>
</dbReference>
<feature type="chain" id="PRO_0000182476" description="Heat-inducible transcription repressor HrcA">
    <location>
        <begin position="1"/>
        <end position="341"/>
    </location>
</feature>
<keyword id="KW-1185">Reference proteome</keyword>
<keyword id="KW-0678">Repressor</keyword>
<keyword id="KW-0346">Stress response</keyword>
<keyword id="KW-0804">Transcription</keyword>
<keyword id="KW-0805">Transcription regulation</keyword>
<comment type="function">
    <text evidence="1">Negative regulator of class I heat shock genes (grpE-dnaK-dnaJ and groELS operons). Prevents heat-shock induction of these operons.</text>
</comment>
<comment type="similarity">
    <text evidence="1">Belongs to the HrcA family.</text>
</comment>
<comment type="sequence caution" evidence="2">
    <conflict type="erroneous initiation">
        <sequence resource="EMBL-CDS" id="CAF20633"/>
    </conflict>
</comment>
<name>HRCA_CORGL</name>
<gene>
    <name evidence="1" type="primary">hrcA</name>
    <name type="ordered locus">Cgl2291</name>
    <name type="ordered locus">cg2516</name>
</gene>
<reference key="1">
    <citation type="journal article" date="2003" name="Appl. Microbiol. Biotechnol.">
        <title>The Corynebacterium glutamicum genome: features and impacts on biotechnological processes.</title>
        <authorList>
            <person name="Ikeda M."/>
            <person name="Nakagawa S."/>
        </authorList>
    </citation>
    <scope>NUCLEOTIDE SEQUENCE [LARGE SCALE GENOMIC DNA]</scope>
    <source>
        <strain>ATCC 13032 / DSM 20300 / JCM 1318 / BCRC 11384 / CCUG 27702 / LMG 3730 / NBRC 12168 / NCIMB 10025 / NRRL B-2784 / 534</strain>
    </source>
</reference>
<reference key="2">
    <citation type="journal article" date="2003" name="J. Biotechnol.">
        <title>The complete Corynebacterium glutamicum ATCC 13032 genome sequence and its impact on the production of L-aspartate-derived amino acids and vitamins.</title>
        <authorList>
            <person name="Kalinowski J."/>
            <person name="Bathe B."/>
            <person name="Bartels D."/>
            <person name="Bischoff N."/>
            <person name="Bott M."/>
            <person name="Burkovski A."/>
            <person name="Dusch N."/>
            <person name="Eggeling L."/>
            <person name="Eikmanns B.J."/>
            <person name="Gaigalat L."/>
            <person name="Goesmann A."/>
            <person name="Hartmann M."/>
            <person name="Huthmacher K."/>
            <person name="Kraemer R."/>
            <person name="Linke B."/>
            <person name="McHardy A.C."/>
            <person name="Meyer F."/>
            <person name="Moeckel B."/>
            <person name="Pfefferle W."/>
            <person name="Puehler A."/>
            <person name="Rey D.A."/>
            <person name="Rueckert C."/>
            <person name="Rupp O."/>
            <person name="Sahm H."/>
            <person name="Wendisch V.F."/>
            <person name="Wiegraebe I."/>
            <person name="Tauch A."/>
        </authorList>
    </citation>
    <scope>NUCLEOTIDE SEQUENCE [LARGE SCALE GENOMIC DNA]</scope>
    <source>
        <strain>ATCC 13032 / DSM 20300 / JCM 1318 / BCRC 11384 / CCUG 27702 / LMG 3730 / NBRC 12168 / NCIMB 10025 / NRRL B-2784 / 534</strain>
    </source>
</reference>
<organism>
    <name type="scientific">Corynebacterium glutamicum (strain ATCC 13032 / DSM 20300 / JCM 1318 / BCRC 11384 / CCUG 27702 / LMG 3730 / NBRC 12168 / NCIMB 10025 / NRRL B-2784 / 534)</name>
    <dbReference type="NCBI Taxonomy" id="196627"/>
    <lineage>
        <taxon>Bacteria</taxon>
        <taxon>Bacillati</taxon>
        <taxon>Actinomycetota</taxon>
        <taxon>Actinomycetes</taxon>
        <taxon>Mycobacteriales</taxon>
        <taxon>Corynebacteriaceae</taxon>
        <taxon>Corynebacterium</taxon>
    </lineage>
</organism>
<accession>Q8NNB3</accession>
<sequence>MSATEKRRYEVLRAIVADYIASQEPVGSKSLLERHKLNVSSATIRNDMSVLESDGFIVQEHASSGRVPTERGYRLFVDSIHDIKPLSLAERRAILGFLEGGVDLEDVLRRSVQLLSQLTHQAAVVQLPTLKTARVKHCEVVPLSPMRLLLVLITDTGRVDQRNVELEEPLAAEEVNVLRDLLNGALGEKTLTAASDALEELAQQAPTDIRDAMRRCCDVLVNTLVDQPSDRLILAGTSNLTRLSRETSASLPMVLEALEEQVVMLKLLSNVTDLDQVRVHIGGENEDIELRSATVITTGYGSQGSALGGLGVVGPTYMDYSGTISKVSAVAKYVGRVLAGE</sequence>